<protein>
    <recommendedName>
        <fullName>Retinal homeobox protein Rx2</fullName>
    </recommendedName>
</protein>
<proteinExistence type="evidence at transcript level"/>
<feature type="chain" id="PRO_0000049286" description="Retinal homeobox protein Rx2">
    <location>
        <begin position="1"/>
        <end position="327"/>
    </location>
</feature>
<feature type="DNA-binding region" description="Homeobox" evidence="3">
    <location>
        <begin position="137"/>
        <end position="196"/>
    </location>
</feature>
<feature type="region of interest" description="Disordered" evidence="5">
    <location>
        <begin position="52"/>
        <end position="140"/>
    </location>
</feature>
<feature type="short sequence motif" description="Octapeptide motif">
    <location>
        <begin position="37"/>
        <end position="44"/>
    </location>
</feature>
<feature type="short sequence motif" description="OAR" evidence="4">
    <location>
        <begin position="304"/>
        <end position="317"/>
    </location>
</feature>
<feature type="short sequence motif" description="Nuclear localization signal" evidence="2">
    <location>
        <begin position="310"/>
        <end position="314"/>
    </location>
</feature>
<feature type="compositionally biased region" description="Basic and acidic residues" evidence="5">
    <location>
        <begin position="52"/>
        <end position="61"/>
    </location>
</feature>
<feature type="sequence conflict" description="In Ref. 2; CAA07775." evidence="6" ref="2">
    <original>KEEEHG</original>
    <variation>DDEQQP</variation>
    <location>
        <begin position="128"/>
        <end position="133"/>
    </location>
</feature>
<feature type="sequence conflict" description="In Ref. 2; CAA07775." evidence="6" ref="2">
    <original>A</original>
    <variation>G</variation>
    <location>
        <position position="226"/>
    </location>
</feature>
<sequence>MHLSMDTLGMVDDSGHGIVDSYDMAKGAGSSNGGRVHSIDVILGFTKDQEPLLHSVGDDGSPKVNGALQQDPAKPVPSEPYGNLPELGDSSQHHSYHDSSLFSSDKCEEMSNLTKEVDIADGSPKSIKEEEHGKKKHRRNRTTFTTYQLHELERAFEKSHYPDVYSREELATKVNLPEVRVQVWFQNRRAKWRRQEKMDTSTMKLHDSPMLSFNRPPMPPSVGQVANPMPLDPWLTSPISSATPMHTIPGFMSSPQTLQPTYSSHSFLNSPPGMVQGMQPMGPPAYQCAPPFNDKYPVEDDRNSSIAALRMKAKEHIQSMDKTWQHM</sequence>
<reference key="1">
    <citation type="journal article" date="2000" name="Development">
        <title>The conditional medaka mutation eyeless uncouples patterning and morphogenesis of the eye.</title>
        <authorList>
            <person name="Winkler S."/>
            <person name="Loosli F."/>
            <person name="Henrich T."/>
            <person name="Wakamatsu Y."/>
            <person name="Wittbrodt J."/>
        </authorList>
    </citation>
    <scope>NUCLEOTIDE SEQUENCE [MRNA]</scope>
</reference>
<reference key="2">
    <citation type="journal article" date="1999" name="Genes Dev.">
        <title>Six3 overexpression initiates the formation of ectopic retina.</title>
        <authorList>
            <person name="Loosli F."/>
            <person name="Winkler S."/>
            <person name="Wittbrodt J."/>
        </authorList>
    </citation>
    <scope>NUCLEOTIDE SEQUENCE [MRNA] OF 128-315</scope>
</reference>
<organism>
    <name type="scientific">Oryzias latipes</name>
    <name type="common">Japanese rice fish</name>
    <name type="synonym">Japanese killifish</name>
    <dbReference type="NCBI Taxonomy" id="8090"/>
    <lineage>
        <taxon>Eukaryota</taxon>
        <taxon>Metazoa</taxon>
        <taxon>Chordata</taxon>
        <taxon>Craniata</taxon>
        <taxon>Vertebrata</taxon>
        <taxon>Euteleostomi</taxon>
        <taxon>Actinopterygii</taxon>
        <taxon>Neopterygii</taxon>
        <taxon>Teleostei</taxon>
        <taxon>Neoteleostei</taxon>
        <taxon>Acanthomorphata</taxon>
        <taxon>Ovalentaria</taxon>
        <taxon>Atherinomorphae</taxon>
        <taxon>Beloniformes</taxon>
        <taxon>Adrianichthyidae</taxon>
        <taxon>Oryziinae</taxon>
        <taxon>Oryzias</taxon>
    </lineage>
</organism>
<accession>Q9I9A2</accession>
<accession>Q9YHA2</accession>
<gene>
    <name type="primary">rx2</name>
</gene>
<name>RX2_ORYLA</name>
<evidence type="ECO:0000250" key="1"/>
<evidence type="ECO:0000255" key="2"/>
<evidence type="ECO:0000255" key="3">
    <source>
        <dbReference type="PROSITE-ProRule" id="PRU00108"/>
    </source>
</evidence>
<evidence type="ECO:0000255" key="4">
    <source>
        <dbReference type="PROSITE-ProRule" id="PRU00138"/>
    </source>
</evidence>
<evidence type="ECO:0000256" key="5">
    <source>
        <dbReference type="SAM" id="MobiDB-lite"/>
    </source>
</evidence>
<evidence type="ECO:0000305" key="6"/>
<comment type="function">
    <text evidence="1">Plays a critical role in eye formation by regulating the initial specification of retinal cells and/or their subsequent proliferation.</text>
</comment>
<comment type="subcellular location">
    <subcellularLocation>
        <location evidence="3 4">Nucleus</location>
    </subcellularLocation>
</comment>
<comment type="developmental stage">
    <text>Expressed in the retina from early somitogenesis (stage 19) onwards.</text>
</comment>
<comment type="similarity">
    <text evidence="6">Belongs to the paired homeobox family. Bicoid subfamily.</text>
</comment>
<keyword id="KW-0217">Developmental protein</keyword>
<keyword id="KW-0238">DNA-binding</keyword>
<keyword id="KW-0371">Homeobox</keyword>
<keyword id="KW-0539">Nucleus</keyword>
<keyword id="KW-1185">Reference proteome</keyword>
<keyword id="KW-0804">Transcription</keyword>
<keyword id="KW-0805">Transcription regulation</keyword>
<dbReference type="EMBL" id="AJ250405">
    <property type="protein sequence ID" value="CAB88703.1"/>
    <property type="molecule type" value="mRNA"/>
</dbReference>
<dbReference type="EMBL" id="AJ007939">
    <property type="protein sequence ID" value="CAA07775.1"/>
    <property type="molecule type" value="mRNA"/>
</dbReference>
<dbReference type="RefSeq" id="NP_001098373.1">
    <property type="nucleotide sequence ID" value="NM_001104903.1"/>
</dbReference>
<dbReference type="SMR" id="Q9I9A2"/>
<dbReference type="FunCoup" id="Q9I9A2">
    <property type="interactions" value="20"/>
</dbReference>
<dbReference type="STRING" id="8090.ENSORLP00000022547"/>
<dbReference type="Ensembl" id="ENSORLT00000022548.2">
    <property type="protein sequence ID" value="ENSORLP00000022547.2"/>
    <property type="gene ID" value="ENSORLG00000018007.2"/>
</dbReference>
<dbReference type="GeneID" id="100125458"/>
<dbReference type="KEGG" id="ola:100125458"/>
<dbReference type="CTD" id="30473"/>
<dbReference type="eggNOG" id="KOG0490">
    <property type="taxonomic scope" value="Eukaryota"/>
</dbReference>
<dbReference type="GeneTree" id="ENSGT00940000163917"/>
<dbReference type="HOGENOM" id="CLU_047013_2_0_1"/>
<dbReference type="InParanoid" id="Q9I9A2"/>
<dbReference type="OrthoDB" id="6159439at2759"/>
<dbReference type="Proteomes" id="UP000001038">
    <property type="component" value="Chromosome 17"/>
</dbReference>
<dbReference type="Proteomes" id="UP000265180">
    <property type="component" value="Unplaced"/>
</dbReference>
<dbReference type="Proteomes" id="UP000265200">
    <property type="component" value="Unplaced"/>
</dbReference>
<dbReference type="Bgee" id="ENSORLG00000018007">
    <property type="expression patterns" value="Expressed in sexually immature organism and 4 other cell types or tissues"/>
</dbReference>
<dbReference type="GO" id="GO:0005634">
    <property type="term" value="C:nucleus"/>
    <property type="evidence" value="ECO:0007669"/>
    <property type="project" value="UniProtKB-SubCell"/>
</dbReference>
<dbReference type="GO" id="GO:0000981">
    <property type="term" value="F:DNA-binding transcription factor activity, RNA polymerase II-specific"/>
    <property type="evidence" value="ECO:0000318"/>
    <property type="project" value="GO_Central"/>
</dbReference>
<dbReference type="GO" id="GO:0000978">
    <property type="term" value="F:RNA polymerase II cis-regulatory region sequence-specific DNA binding"/>
    <property type="evidence" value="ECO:0000318"/>
    <property type="project" value="GO_Central"/>
</dbReference>
<dbReference type="GO" id="GO:0045944">
    <property type="term" value="P:positive regulation of transcription by RNA polymerase II"/>
    <property type="evidence" value="ECO:0007669"/>
    <property type="project" value="InterPro"/>
</dbReference>
<dbReference type="GO" id="GO:0006357">
    <property type="term" value="P:regulation of transcription by RNA polymerase II"/>
    <property type="evidence" value="ECO:0000318"/>
    <property type="project" value="GO_Central"/>
</dbReference>
<dbReference type="CDD" id="cd00086">
    <property type="entry name" value="homeodomain"/>
    <property type="match status" value="1"/>
</dbReference>
<dbReference type="FunFam" id="1.10.10.60:FF:000071">
    <property type="entry name" value="Retinal homeobox gene 2"/>
    <property type="match status" value="1"/>
</dbReference>
<dbReference type="Gene3D" id="1.10.10.60">
    <property type="entry name" value="Homeodomain-like"/>
    <property type="match status" value="1"/>
</dbReference>
<dbReference type="InterPro" id="IPR001356">
    <property type="entry name" value="HD"/>
</dbReference>
<dbReference type="InterPro" id="IPR017970">
    <property type="entry name" value="Homeobox_CS"/>
</dbReference>
<dbReference type="InterPro" id="IPR009057">
    <property type="entry name" value="Homeodomain-like_sf"/>
</dbReference>
<dbReference type="InterPro" id="IPR003654">
    <property type="entry name" value="OAR_dom"/>
</dbReference>
<dbReference type="InterPro" id="IPR043562">
    <property type="entry name" value="RAX/RAX2"/>
</dbReference>
<dbReference type="PANTHER" id="PTHR46271">
    <property type="entry name" value="HOMEOBOX PROTEIN, PUTATIVE-RELATED"/>
    <property type="match status" value="1"/>
</dbReference>
<dbReference type="PANTHER" id="PTHR46271:SF2">
    <property type="entry name" value="RETINA AND ANTERIOR NEURAL FOLD HOMEOBOX PROTEIN 2"/>
    <property type="match status" value="1"/>
</dbReference>
<dbReference type="Pfam" id="PF00046">
    <property type="entry name" value="Homeodomain"/>
    <property type="match status" value="1"/>
</dbReference>
<dbReference type="Pfam" id="PF03826">
    <property type="entry name" value="OAR"/>
    <property type="match status" value="1"/>
</dbReference>
<dbReference type="SMART" id="SM00389">
    <property type="entry name" value="HOX"/>
    <property type="match status" value="1"/>
</dbReference>
<dbReference type="SUPFAM" id="SSF46689">
    <property type="entry name" value="Homeodomain-like"/>
    <property type="match status" value="1"/>
</dbReference>
<dbReference type="PROSITE" id="PS00027">
    <property type="entry name" value="HOMEOBOX_1"/>
    <property type="match status" value="1"/>
</dbReference>
<dbReference type="PROSITE" id="PS50071">
    <property type="entry name" value="HOMEOBOX_2"/>
    <property type="match status" value="1"/>
</dbReference>
<dbReference type="PROSITE" id="PS50803">
    <property type="entry name" value="OAR"/>
    <property type="match status" value="1"/>
</dbReference>